<protein>
    <recommendedName>
        <fullName evidence="1">Potassium-transporting ATPase potassium-binding subunit</fullName>
    </recommendedName>
    <alternativeName>
        <fullName evidence="1">ATP phosphohydrolase [potassium-transporting] A chain</fullName>
    </alternativeName>
    <alternativeName>
        <fullName evidence="1">Potassium-binding and translocating subunit A</fullName>
    </alternativeName>
    <alternativeName>
        <fullName evidence="1">Potassium-translocating ATPase A chain</fullName>
    </alternativeName>
</protein>
<name>KDPA_YERPG</name>
<comment type="function">
    <text evidence="1">Part of the high-affinity ATP-driven potassium transport (or Kdp) system, which catalyzes the hydrolysis of ATP coupled with the electrogenic transport of potassium into the cytoplasm. This subunit binds the periplasmic potassium ions and delivers the ions to the membrane domain of KdpB through an intramembrane tunnel.</text>
</comment>
<comment type="subunit">
    <text evidence="1">The system is composed of three essential subunits: KdpA, KdpB and KdpC.</text>
</comment>
<comment type="subcellular location">
    <subcellularLocation>
        <location evidence="1">Cell inner membrane</location>
        <topology evidence="1">Multi-pass membrane protein</topology>
    </subcellularLocation>
</comment>
<comment type="similarity">
    <text evidence="1">Belongs to the KdpA family.</text>
</comment>
<dbReference type="EMBL" id="CP000901">
    <property type="protein sequence ID" value="ABX86451.1"/>
    <property type="molecule type" value="Genomic_DNA"/>
</dbReference>
<dbReference type="RefSeq" id="WP_002209652.1">
    <property type="nucleotide sequence ID" value="NZ_CP009935.1"/>
</dbReference>
<dbReference type="SMR" id="A9R3X4"/>
<dbReference type="GeneID" id="57976001"/>
<dbReference type="KEGG" id="ypg:YpAngola_A3582"/>
<dbReference type="PATRIC" id="fig|349746.12.peg.280"/>
<dbReference type="GO" id="GO:0005886">
    <property type="term" value="C:plasma membrane"/>
    <property type="evidence" value="ECO:0007669"/>
    <property type="project" value="UniProtKB-SubCell"/>
</dbReference>
<dbReference type="GO" id="GO:0008556">
    <property type="term" value="F:P-type potassium transmembrane transporter activity"/>
    <property type="evidence" value="ECO:0007669"/>
    <property type="project" value="InterPro"/>
</dbReference>
<dbReference type="GO" id="GO:0030955">
    <property type="term" value="F:potassium ion binding"/>
    <property type="evidence" value="ECO:0007669"/>
    <property type="project" value="UniProtKB-UniRule"/>
</dbReference>
<dbReference type="HAMAP" id="MF_00275">
    <property type="entry name" value="KdpA"/>
    <property type="match status" value="1"/>
</dbReference>
<dbReference type="InterPro" id="IPR004623">
    <property type="entry name" value="KdpA"/>
</dbReference>
<dbReference type="NCBIfam" id="TIGR00680">
    <property type="entry name" value="kdpA"/>
    <property type="match status" value="1"/>
</dbReference>
<dbReference type="PANTHER" id="PTHR30607">
    <property type="entry name" value="POTASSIUM-TRANSPORTING ATPASE A CHAIN"/>
    <property type="match status" value="1"/>
</dbReference>
<dbReference type="PANTHER" id="PTHR30607:SF2">
    <property type="entry name" value="POTASSIUM-TRANSPORTING ATPASE POTASSIUM-BINDING SUBUNIT"/>
    <property type="match status" value="1"/>
</dbReference>
<dbReference type="Pfam" id="PF03814">
    <property type="entry name" value="KdpA"/>
    <property type="match status" value="1"/>
</dbReference>
<dbReference type="PIRSF" id="PIRSF001294">
    <property type="entry name" value="K_ATPaseA"/>
    <property type="match status" value="1"/>
</dbReference>
<keyword id="KW-0997">Cell inner membrane</keyword>
<keyword id="KW-1003">Cell membrane</keyword>
<keyword id="KW-0406">Ion transport</keyword>
<keyword id="KW-0472">Membrane</keyword>
<keyword id="KW-0630">Potassium</keyword>
<keyword id="KW-0633">Potassium transport</keyword>
<keyword id="KW-0812">Transmembrane</keyword>
<keyword id="KW-1133">Transmembrane helix</keyword>
<keyword id="KW-0813">Transport</keyword>
<gene>
    <name evidence="1" type="primary">kdpA</name>
    <name type="ordered locus">YpAngola_A3582</name>
</gene>
<proteinExistence type="inferred from homology"/>
<accession>A9R3X4</accession>
<sequence length="562" mass="59249">MVASGFLLIASFMLVLFVLSRPLGGFLARLIEGEPFSALQKVEAGLWRCSGVKNAEMNGWQYALAILCFNLLGIVLLFVLLMTQGSLPLNPEHLPGMSWHLALNTAVSFVTNTNWQAYSGENTLSYLSQMAGLTVQNFLSAATGIAVAFALIRAFARHSATTLGNAWVDLVRITLYVLLPIALIIALIFVSQGVLQNLDDYLHITTLEGVQQTLPMGPVASQEAIKVLGTNGGGFFGANSAHPFENPTAFSNFVQMLAIFLIPCALCFAFGQVVGDNRQGHALIWAMSLIFIVAVVVVMYAELAGNPHLSPLGADSNSNMEGKESRFGILATSLYAVVTTAASCGAVNAMHDSFTALGGMIPLWLMQIGEVVFGGVGSGLYGMLLFVLLTVFIAGLMIGRTPEYLGKKIDVFDMKMTALAILVTPTIVLLGTALALCTEAGRAGILNPGAHGFSEVLYALSSAANNNGSAFAGLSVNTPFYNLLLAAAMFIGRFGVILPVLAIASSLVAKKRQPAGNGTLPTGGLLFIGLLIGTVLLVGALTFIPALALGPVAEHLQVWLAH</sequence>
<organism>
    <name type="scientific">Yersinia pestis bv. Antiqua (strain Angola)</name>
    <dbReference type="NCBI Taxonomy" id="349746"/>
    <lineage>
        <taxon>Bacteria</taxon>
        <taxon>Pseudomonadati</taxon>
        <taxon>Pseudomonadota</taxon>
        <taxon>Gammaproteobacteria</taxon>
        <taxon>Enterobacterales</taxon>
        <taxon>Yersiniaceae</taxon>
        <taxon>Yersinia</taxon>
    </lineage>
</organism>
<reference key="1">
    <citation type="journal article" date="2010" name="J. Bacteriol.">
        <title>Genome sequence of the deep-rooted Yersinia pestis strain Angola reveals new insights into the evolution and pangenome of the plague bacterium.</title>
        <authorList>
            <person name="Eppinger M."/>
            <person name="Worsham P.L."/>
            <person name="Nikolich M.P."/>
            <person name="Riley D.R."/>
            <person name="Sebastian Y."/>
            <person name="Mou S."/>
            <person name="Achtman M."/>
            <person name="Lindler L.E."/>
            <person name="Ravel J."/>
        </authorList>
    </citation>
    <scope>NUCLEOTIDE SEQUENCE [LARGE SCALE GENOMIC DNA]</scope>
    <source>
        <strain>Angola</strain>
    </source>
</reference>
<feature type="chain" id="PRO_1000114709" description="Potassium-transporting ATPase potassium-binding subunit">
    <location>
        <begin position="1"/>
        <end position="562"/>
    </location>
</feature>
<feature type="transmembrane region" description="Helical" evidence="1">
    <location>
        <begin position="6"/>
        <end position="26"/>
    </location>
</feature>
<feature type="transmembrane region" description="Helical" evidence="1">
    <location>
        <begin position="62"/>
        <end position="82"/>
    </location>
</feature>
<feature type="transmembrane region" description="Helical" evidence="1">
    <location>
        <begin position="132"/>
        <end position="152"/>
    </location>
</feature>
<feature type="transmembrane region" description="Helical" evidence="1">
    <location>
        <begin position="175"/>
        <end position="195"/>
    </location>
</feature>
<feature type="transmembrane region" description="Helical" evidence="1">
    <location>
        <begin position="253"/>
        <end position="273"/>
    </location>
</feature>
<feature type="transmembrane region" description="Helical" evidence="1">
    <location>
        <begin position="283"/>
        <end position="303"/>
    </location>
</feature>
<feature type="transmembrane region" description="Helical" evidence="1">
    <location>
        <begin position="327"/>
        <end position="347"/>
    </location>
</feature>
<feature type="transmembrane region" description="Helical" evidence="1">
    <location>
        <begin position="356"/>
        <end position="376"/>
    </location>
</feature>
<feature type="transmembrane region" description="Helical" evidence="1">
    <location>
        <begin position="379"/>
        <end position="399"/>
    </location>
</feature>
<feature type="transmembrane region" description="Helical" evidence="1">
    <location>
        <begin position="416"/>
        <end position="436"/>
    </location>
</feature>
<feature type="transmembrane region" description="Helical" evidence="1">
    <location>
        <begin position="483"/>
        <end position="503"/>
    </location>
</feature>
<feature type="transmembrane region" description="Helical" evidence="1">
    <location>
        <begin position="524"/>
        <end position="544"/>
    </location>
</feature>
<evidence type="ECO:0000255" key="1">
    <source>
        <dbReference type="HAMAP-Rule" id="MF_00275"/>
    </source>
</evidence>